<feature type="chain" id="PRO_0000213135" description="Protein-cysteine N-palmitoyltransferase HHAT">
    <location>
        <begin position="1"/>
        <end position="499"/>
    </location>
</feature>
<feature type="topological domain" description="Cytoplasmic" evidence="3">
    <location>
        <begin position="1"/>
        <end position="5"/>
    </location>
</feature>
<feature type="transmembrane region" description="Helical" evidence="3">
    <location>
        <begin position="6"/>
        <end position="22"/>
    </location>
</feature>
<feature type="topological domain" description="Lumenal" evidence="3">
    <location>
        <begin position="23"/>
        <end position="67"/>
    </location>
</feature>
<feature type="transmembrane region" description="Helical" evidence="3">
    <location>
        <begin position="68"/>
        <end position="84"/>
    </location>
</feature>
<feature type="topological domain" description="Cytoplasmic" evidence="3">
    <location>
        <begin position="85"/>
        <end position="94"/>
    </location>
</feature>
<feature type="intramembrane region" evidence="3">
    <location>
        <begin position="95"/>
        <end position="119"/>
    </location>
</feature>
<feature type="topological domain" description="Cytoplasmic" evidence="3">
    <location>
        <begin position="120"/>
        <end position="131"/>
    </location>
</feature>
<feature type="transmembrane region" description="Helical" evidence="3">
    <location>
        <begin position="132"/>
        <end position="148"/>
    </location>
</feature>
<feature type="topological domain" description="Lumenal" evidence="3">
    <location>
        <begin position="149"/>
        <end position="162"/>
    </location>
</feature>
<feature type="transmembrane region" description="Helical" evidence="3">
    <location>
        <begin position="163"/>
        <end position="183"/>
    </location>
</feature>
<feature type="topological domain" description="Cytoplasmic" evidence="3">
    <location>
        <begin position="184"/>
        <end position="208"/>
    </location>
</feature>
<feature type="intramembrane region" evidence="3">
    <location>
        <begin position="209"/>
        <end position="223"/>
    </location>
</feature>
<feature type="topological domain" description="Cytoplasmic" evidence="3">
    <location>
        <begin position="224"/>
        <end position="249"/>
    </location>
</feature>
<feature type="transmembrane region" description="Helical" evidence="3">
    <location>
        <begin position="250"/>
        <end position="277"/>
    </location>
</feature>
<feature type="topological domain" description="Lumenal" evidence="3">
    <location>
        <begin position="278"/>
        <end position="287"/>
    </location>
</feature>
<feature type="transmembrane region" description="Helical" evidence="3">
    <location>
        <begin position="288"/>
        <end position="316"/>
    </location>
</feature>
<feature type="topological domain" description="Cytoplasmic" evidence="3">
    <location>
        <begin position="317"/>
        <end position="369"/>
    </location>
</feature>
<feature type="transmembrane region" description="Helical" evidence="3">
    <location>
        <begin position="370"/>
        <end position="386"/>
    </location>
</feature>
<feature type="topological domain" description="Lumenal" evidence="3">
    <location>
        <begin position="387"/>
        <end position="389"/>
    </location>
</feature>
<feature type="transmembrane region" description="Helical" evidence="3">
    <location>
        <begin position="390"/>
        <end position="405"/>
    </location>
</feature>
<feature type="topological domain" description="Cytoplasmic" evidence="3">
    <location>
        <begin position="406"/>
        <end position="433"/>
    </location>
</feature>
<feature type="transmembrane region" description="Helical" evidence="3">
    <location>
        <begin position="434"/>
        <end position="454"/>
    </location>
</feature>
<feature type="topological domain" description="Lumenal" evidence="3">
    <location>
        <begin position="455"/>
        <end position="468"/>
    </location>
</feature>
<feature type="transmembrane region" description="Helical" evidence="3">
    <location>
        <begin position="469"/>
        <end position="487"/>
    </location>
</feature>
<feature type="topological domain" description="Cytoplasmic" evidence="3">
    <location>
        <begin position="488"/>
        <end position="499"/>
    </location>
</feature>
<feature type="region of interest" description="Essential for palmitoylation of SHH" evidence="1">
    <location>
        <begin position="91"/>
        <end position="155"/>
    </location>
</feature>
<feature type="active site" evidence="3">
    <location>
        <position position="385"/>
    </location>
</feature>
<feature type="binding site" evidence="2">
    <location>
        <begin position="454"/>
        <end position="461"/>
    </location>
    <ligand>
        <name>GTP</name>
        <dbReference type="ChEBI" id="CHEBI:37565"/>
    </ligand>
</feature>
<feature type="lipid moiety-binding region" description="S-palmitoyl cysteine" evidence="2">
    <location>
        <position position="188"/>
    </location>
</feature>
<feature type="lipid moiety-binding region" description="S-palmitoyl cysteine" evidence="2">
    <location>
        <position position="248"/>
    </location>
</feature>
<feature type="lipid moiety-binding region" description="S-palmitoyl cysteine" evidence="2">
    <location>
        <position position="330"/>
    </location>
</feature>
<feature type="lipid moiety-binding region" description="S-palmitoyl cysteine" evidence="2">
    <location>
        <position position="416"/>
    </location>
</feature>
<feature type="splice variant" id="VSP_016690" description="In isoform 2." evidence="7">
    <original>GWPW</original>
    <variation>AAFR</variation>
    <location>
        <begin position="470"/>
        <end position="473"/>
    </location>
</feature>
<feature type="splice variant" id="VSP_016691" description="In isoform 2." evidence="7">
    <location>
        <begin position="474"/>
        <end position="499"/>
    </location>
</feature>
<feature type="sequence conflict" description="In Ref. 1; BAE42837." evidence="8" ref="1">
    <original>D</original>
    <variation>G</variation>
    <location>
        <position position="489"/>
    </location>
</feature>
<dbReference type="EC" id="2.3.1.-"/>
<dbReference type="EMBL" id="AK028230">
    <property type="protein sequence ID" value="BAC25829.1"/>
    <property type="molecule type" value="mRNA"/>
</dbReference>
<dbReference type="EMBL" id="AK172126">
    <property type="protein sequence ID" value="BAE42837.1"/>
    <property type="molecule type" value="mRNA"/>
</dbReference>
<dbReference type="EMBL" id="AC105325">
    <property type="status" value="NOT_ANNOTATED_CDS"/>
    <property type="molecule type" value="Genomic_DNA"/>
</dbReference>
<dbReference type="EMBL" id="AC115917">
    <property type="status" value="NOT_ANNOTATED_CDS"/>
    <property type="molecule type" value="Genomic_DNA"/>
</dbReference>
<dbReference type="EMBL" id="AL365317">
    <property type="status" value="NOT_ANNOTATED_CDS"/>
    <property type="molecule type" value="Genomic_DNA"/>
</dbReference>
<dbReference type="EMBL" id="BC008159">
    <property type="protein sequence ID" value="AAH08159.1"/>
    <property type="molecule type" value="mRNA"/>
</dbReference>
<dbReference type="CCDS" id="CCDS15628.1">
    <molecule id="Q8BMT9-1"/>
</dbReference>
<dbReference type="RefSeq" id="NP_659130.2">
    <molecule id="Q8BMT9-1"/>
    <property type="nucleotide sequence ID" value="NM_144881.4"/>
</dbReference>
<dbReference type="SMR" id="Q8BMT9"/>
<dbReference type="BioGRID" id="230564">
    <property type="interactions" value="1"/>
</dbReference>
<dbReference type="FunCoup" id="Q8BMT9">
    <property type="interactions" value="1016"/>
</dbReference>
<dbReference type="STRING" id="10090.ENSMUSP00000046686"/>
<dbReference type="ChEMBL" id="CHEMBL1255153"/>
<dbReference type="TCDB" id="2.A.50.1.3">
    <property type="family name" value="the glycerol uptake (gup) or membrane-bound acyl transferase (mboat) family"/>
</dbReference>
<dbReference type="GlyGen" id="Q8BMT9">
    <property type="glycosylation" value="1 site"/>
</dbReference>
<dbReference type="PhosphoSitePlus" id="Q8BMT9"/>
<dbReference type="PaxDb" id="10090-ENSMUSP00000046686"/>
<dbReference type="ProteomicsDB" id="269662">
    <molecule id="Q8BMT9-1"/>
</dbReference>
<dbReference type="ProteomicsDB" id="269663">
    <molecule id="Q8BMT9-2"/>
</dbReference>
<dbReference type="Antibodypedia" id="47111">
    <property type="antibodies" value="113 antibodies from 23 providers"/>
</dbReference>
<dbReference type="Ensembl" id="ENSMUST00000044190.12">
    <molecule id="Q8BMT9-1"/>
    <property type="protein sequence ID" value="ENSMUSP00000046686.6"/>
    <property type="gene ID" value="ENSMUSG00000037375.17"/>
</dbReference>
<dbReference type="Ensembl" id="ENSMUST00000128619.8">
    <molecule id="Q8BMT9-2"/>
    <property type="protein sequence ID" value="ENSMUSP00000120479.3"/>
    <property type="gene ID" value="ENSMUSG00000037375.17"/>
</dbReference>
<dbReference type="GeneID" id="226861"/>
<dbReference type="KEGG" id="mmu:226861"/>
<dbReference type="UCSC" id="uc007edp.2">
    <molecule id="Q8BMT9-1"/>
    <property type="organism name" value="mouse"/>
</dbReference>
<dbReference type="AGR" id="MGI:2444681"/>
<dbReference type="CTD" id="55733"/>
<dbReference type="MGI" id="MGI:2444681">
    <property type="gene designation" value="Hhat"/>
</dbReference>
<dbReference type="VEuPathDB" id="HostDB:ENSMUSG00000037375"/>
<dbReference type="eggNOG" id="KOG3860">
    <property type="taxonomic scope" value="Eukaryota"/>
</dbReference>
<dbReference type="GeneTree" id="ENSGT00530000063629"/>
<dbReference type="HOGENOM" id="CLU_027533_3_1_1"/>
<dbReference type="InParanoid" id="Q8BMT9"/>
<dbReference type="OMA" id="AWAQTYT"/>
<dbReference type="PhylomeDB" id="Q8BMT9"/>
<dbReference type="TreeFam" id="TF315826"/>
<dbReference type="Reactome" id="R-MMU-5358346">
    <property type="pathway name" value="Hedgehog ligand biogenesis"/>
</dbReference>
<dbReference type="BioGRID-ORCS" id="226861">
    <property type="hits" value="2 hits in 79 CRISPR screens"/>
</dbReference>
<dbReference type="ChiTaRS" id="Hhat">
    <property type="organism name" value="mouse"/>
</dbReference>
<dbReference type="PRO" id="PR:Q8BMT9"/>
<dbReference type="Proteomes" id="UP000000589">
    <property type="component" value="Chromosome 1"/>
</dbReference>
<dbReference type="RNAct" id="Q8BMT9">
    <property type="molecule type" value="protein"/>
</dbReference>
<dbReference type="Bgee" id="ENSMUSG00000037375">
    <property type="expression patterns" value="Expressed in lumbar dorsal root ganglion and 128 other cell types or tissues"/>
</dbReference>
<dbReference type="ExpressionAtlas" id="Q8BMT9">
    <property type="expression patterns" value="baseline and differential"/>
</dbReference>
<dbReference type="GO" id="GO:0005783">
    <property type="term" value="C:endoplasmic reticulum"/>
    <property type="evidence" value="ECO:0000250"/>
    <property type="project" value="UniProtKB"/>
</dbReference>
<dbReference type="GO" id="GO:0005789">
    <property type="term" value="C:endoplasmic reticulum membrane"/>
    <property type="evidence" value="ECO:0007669"/>
    <property type="project" value="UniProtKB-SubCell"/>
</dbReference>
<dbReference type="GO" id="GO:0005794">
    <property type="term" value="C:Golgi apparatus"/>
    <property type="evidence" value="ECO:0000250"/>
    <property type="project" value="UniProtKB"/>
</dbReference>
<dbReference type="GO" id="GO:0000139">
    <property type="term" value="C:Golgi membrane"/>
    <property type="evidence" value="ECO:0007669"/>
    <property type="project" value="UniProtKB-SubCell"/>
</dbReference>
<dbReference type="GO" id="GO:0005525">
    <property type="term" value="F:GTP binding"/>
    <property type="evidence" value="ECO:0007669"/>
    <property type="project" value="UniProtKB-KW"/>
</dbReference>
<dbReference type="GO" id="GO:0016409">
    <property type="term" value="F:palmitoyltransferase activity"/>
    <property type="evidence" value="ECO:0000315"/>
    <property type="project" value="MGI"/>
</dbReference>
<dbReference type="GO" id="GO:0018009">
    <property type="term" value="P:N-terminal peptidyl-L-cysteine N-palmitoylation"/>
    <property type="evidence" value="ECO:0000315"/>
    <property type="project" value="UniProtKB"/>
</dbReference>
<dbReference type="GO" id="GO:0007224">
    <property type="term" value="P:smoothened signaling pathway"/>
    <property type="evidence" value="ECO:0000315"/>
    <property type="project" value="MGI"/>
</dbReference>
<dbReference type="InterPro" id="IPR051085">
    <property type="entry name" value="MB_O-acyltransferase"/>
</dbReference>
<dbReference type="InterPro" id="IPR004299">
    <property type="entry name" value="MBOAT_fam"/>
</dbReference>
<dbReference type="PANTHER" id="PTHR13285">
    <property type="entry name" value="ACYLTRANSFERASE"/>
    <property type="match status" value="1"/>
</dbReference>
<dbReference type="PANTHER" id="PTHR13285:SF20">
    <property type="entry name" value="PROTEIN-CYSTEINE N-PALMITOYLTRANSFERASE HHAT"/>
    <property type="match status" value="1"/>
</dbReference>
<dbReference type="Pfam" id="PF03062">
    <property type="entry name" value="MBOAT"/>
    <property type="match status" value="1"/>
</dbReference>
<comment type="function">
    <text evidence="1 4 6">Palmitoyl acyltransferase that catalyzes N-terminal palmitoylation of SHH; which is required for SHH signaling during limb development (PubMed:15075292). It also catalyzes N-terminal palmitoylation of DHH (By similarity). Promotes the transfer of palmitoyl-CoA from the cytoplasmic to the luminal side of the endoplasmic reticulum membrane, where SHH palmitoylation occurs (By similarity). Plays a role in proper testis cord formation and the differentiation of Leydig cells (PubMed:24784881).</text>
</comment>
<comment type="catalytic activity">
    <reaction evidence="4">
        <text>N-terminal L-cysteinyl-[protein] + hexadecanoyl-CoA = N-terminal N-hexadecanoyl-L-cysteinyl-[protein] + CoA + H(+)</text>
        <dbReference type="Rhea" id="RHEA:59528"/>
        <dbReference type="Rhea" id="RHEA-COMP:12707"/>
        <dbReference type="Rhea" id="RHEA-COMP:15376"/>
        <dbReference type="ChEBI" id="CHEBI:15378"/>
        <dbReference type="ChEBI" id="CHEBI:57287"/>
        <dbReference type="ChEBI" id="CHEBI:57379"/>
        <dbReference type="ChEBI" id="CHEBI:65250"/>
        <dbReference type="ChEBI" id="CHEBI:143147"/>
    </reaction>
    <physiologicalReaction direction="left-to-right" evidence="4">
        <dbReference type="Rhea" id="RHEA:59529"/>
    </physiologicalReaction>
</comment>
<comment type="catalytic activity">
    <reaction evidence="9">
        <text>N-terminal L-cysteinyl-[protein]-C-terminal glycyl cholesterol ester + hexadecanoyl-CoA = N-terminal N-hexadecanoyl-L-cysteinyl-[protein]-C-terminal glycyl cholesterol ester + CoA + H(+)</text>
        <dbReference type="Rhea" id="RHEA:59580"/>
        <dbReference type="Rhea" id="RHEA-COMP:15388"/>
        <dbReference type="Rhea" id="RHEA-COMP:15389"/>
        <dbReference type="ChEBI" id="CHEBI:15378"/>
        <dbReference type="ChEBI" id="CHEBI:57287"/>
        <dbReference type="ChEBI" id="CHEBI:57379"/>
        <dbReference type="ChEBI" id="CHEBI:65250"/>
        <dbReference type="ChEBI" id="CHEBI:143135"/>
        <dbReference type="ChEBI" id="CHEBI:143147"/>
    </reaction>
    <physiologicalReaction direction="left-to-right" evidence="9">
        <dbReference type="Rhea" id="RHEA:59581"/>
    </physiologicalReaction>
</comment>
<comment type="subcellular location">
    <subcellularLocation>
        <location evidence="4 5">Endoplasmic reticulum membrane</location>
        <topology evidence="3">Multi-pass membrane protein</topology>
    </subcellularLocation>
    <subcellularLocation>
        <location evidence="1">Golgi apparatus membrane</location>
        <topology evidence="3">Multi-pass membrane protein</topology>
    </subcellularLocation>
    <text evidence="1">Co-localizes with SHH in the ER and Golgi membrane.</text>
</comment>
<comment type="alternative products">
    <event type="alternative splicing"/>
    <isoform>
        <id>Q8BMT9-1</id>
        <name>1</name>
        <sequence type="displayed"/>
    </isoform>
    <isoform>
        <id>Q8BMT9-2</id>
        <name>2</name>
        <sequence type="described" ref="VSP_016690 VSP_016691"/>
    </isoform>
</comment>
<comment type="developmental stage">
    <text evidence="4">Broadly expressed from 7 dpc. At 10.5 dpc, strongly expressed in anterior ectoderm, pharyngeal arches, and distal part of the limb.</text>
</comment>
<comment type="disruption phenotype">
    <text evidence="4 6">Conditional knockout embryos are characterized by a smaller size and holoprosencephaly at 10.5 dpc, shortening of limbs at 13.5 dpc, and severe short-limb dwarfism at birth. They die soon after birth. Testicular development is significantly impaired in XY embryos by 12.5 dpc. There is a massive reduction in testis size, a reduction in the number of testis cords which are irregular in shape and diameter, and an almost complete absence of Leydig cells (PubMed:24784881).</text>
</comment>
<comment type="similarity">
    <text evidence="8">Belongs to the membrane-bound acyltransferase family. HHAT subfamily.</text>
</comment>
<evidence type="ECO:0000250" key="1">
    <source>
        <dbReference type="UniProtKB" id="Q5VTY9"/>
    </source>
</evidence>
<evidence type="ECO:0000250" key="2">
    <source>
        <dbReference type="UniProtKB" id="Q9Y6R1"/>
    </source>
</evidence>
<evidence type="ECO:0000255" key="3"/>
<evidence type="ECO:0000269" key="4">
    <source>
    </source>
</evidence>
<evidence type="ECO:0000269" key="5">
    <source>
    </source>
</evidence>
<evidence type="ECO:0000269" key="6">
    <source>
    </source>
</evidence>
<evidence type="ECO:0000303" key="7">
    <source>
    </source>
</evidence>
<evidence type="ECO:0000305" key="8"/>
<evidence type="ECO:0000305" key="9">
    <source>
    </source>
</evidence>
<organism>
    <name type="scientific">Mus musculus</name>
    <name type="common">Mouse</name>
    <dbReference type="NCBI Taxonomy" id="10090"/>
    <lineage>
        <taxon>Eukaryota</taxon>
        <taxon>Metazoa</taxon>
        <taxon>Chordata</taxon>
        <taxon>Craniata</taxon>
        <taxon>Vertebrata</taxon>
        <taxon>Euteleostomi</taxon>
        <taxon>Mammalia</taxon>
        <taxon>Eutheria</taxon>
        <taxon>Euarchontoglires</taxon>
        <taxon>Glires</taxon>
        <taxon>Rodentia</taxon>
        <taxon>Myomorpha</taxon>
        <taxon>Muroidea</taxon>
        <taxon>Muridae</taxon>
        <taxon>Murinae</taxon>
        <taxon>Mus</taxon>
        <taxon>Mus</taxon>
    </lineage>
</organism>
<reference key="1">
    <citation type="journal article" date="2005" name="Science">
        <title>The transcriptional landscape of the mammalian genome.</title>
        <authorList>
            <person name="Carninci P."/>
            <person name="Kasukawa T."/>
            <person name="Katayama S."/>
            <person name="Gough J."/>
            <person name="Frith M.C."/>
            <person name="Maeda N."/>
            <person name="Oyama R."/>
            <person name="Ravasi T."/>
            <person name="Lenhard B."/>
            <person name="Wells C."/>
            <person name="Kodzius R."/>
            <person name="Shimokawa K."/>
            <person name="Bajic V.B."/>
            <person name="Brenner S.E."/>
            <person name="Batalov S."/>
            <person name="Forrest A.R."/>
            <person name="Zavolan M."/>
            <person name="Davis M.J."/>
            <person name="Wilming L.G."/>
            <person name="Aidinis V."/>
            <person name="Allen J.E."/>
            <person name="Ambesi-Impiombato A."/>
            <person name="Apweiler R."/>
            <person name="Aturaliya R.N."/>
            <person name="Bailey T.L."/>
            <person name="Bansal M."/>
            <person name="Baxter L."/>
            <person name="Beisel K.W."/>
            <person name="Bersano T."/>
            <person name="Bono H."/>
            <person name="Chalk A.M."/>
            <person name="Chiu K.P."/>
            <person name="Choudhary V."/>
            <person name="Christoffels A."/>
            <person name="Clutterbuck D.R."/>
            <person name="Crowe M.L."/>
            <person name="Dalla E."/>
            <person name="Dalrymple B.P."/>
            <person name="de Bono B."/>
            <person name="Della Gatta G."/>
            <person name="di Bernardo D."/>
            <person name="Down T."/>
            <person name="Engstrom P."/>
            <person name="Fagiolini M."/>
            <person name="Faulkner G."/>
            <person name="Fletcher C.F."/>
            <person name="Fukushima T."/>
            <person name="Furuno M."/>
            <person name="Futaki S."/>
            <person name="Gariboldi M."/>
            <person name="Georgii-Hemming P."/>
            <person name="Gingeras T.R."/>
            <person name="Gojobori T."/>
            <person name="Green R.E."/>
            <person name="Gustincich S."/>
            <person name="Harbers M."/>
            <person name="Hayashi Y."/>
            <person name="Hensch T.K."/>
            <person name="Hirokawa N."/>
            <person name="Hill D."/>
            <person name="Huminiecki L."/>
            <person name="Iacono M."/>
            <person name="Ikeo K."/>
            <person name="Iwama A."/>
            <person name="Ishikawa T."/>
            <person name="Jakt M."/>
            <person name="Kanapin A."/>
            <person name="Katoh M."/>
            <person name="Kawasawa Y."/>
            <person name="Kelso J."/>
            <person name="Kitamura H."/>
            <person name="Kitano H."/>
            <person name="Kollias G."/>
            <person name="Krishnan S.P."/>
            <person name="Kruger A."/>
            <person name="Kummerfeld S.K."/>
            <person name="Kurochkin I.V."/>
            <person name="Lareau L.F."/>
            <person name="Lazarevic D."/>
            <person name="Lipovich L."/>
            <person name="Liu J."/>
            <person name="Liuni S."/>
            <person name="McWilliam S."/>
            <person name="Madan Babu M."/>
            <person name="Madera M."/>
            <person name="Marchionni L."/>
            <person name="Matsuda H."/>
            <person name="Matsuzawa S."/>
            <person name="Miki H."/>
            <person name="Mignone F."/>
            <person name="Miyake S."/>
            <person name="Morris K."/>
            <person name="Mottagui-Tabar S."/>
            <person name="Mulder N."/>
            <person name="Nakano N."/>
            <person name="Nakauchi H."/>
            <person name="Ng P."/>
            <person name="Nilsson R."/>
            <person name="Nishiguchi S."/>
            <person name="Nishikawa S."/>
            <person name="Nori F."/>
            <person name="Ohara O."/>
            <person name="Okazaki Y."/>
            <person name="Orlando V."/>
            <person name="Pang K.C."/>
            <person name="Pavan W.J."/>
            <person name="Pavesi G."/>
            <person name="Pesole G."/>
            <person name="Petrovsky N."/>
            <person name="Piazza S."/>
            <person name="Reed J."/>
            <person name="Reid J.F."/>
            <person name="Ring B.Z."/>
            <person name="Ringwald M."/>
            <person name="Rost B."/>
            <person name="Ruan Y."/>
            <person name="Salzberg S.L."/>
            <person name="Sandelin A."/>
            <person name="Schneider C."/>
            <person name="Schoenbach C."/>
            <person name="Sekiguchi K."/>
            <person name="Semple C.A."/>
            <person name="Seno S."/>
            <person name="Sessa L."/>
            <person name="Sheng Y."/>
            <person name="Shibata Y."/>
            <person name="Shimada H."/>
            <person name="Shimada K."/>
            <person name="Silva D."/>
            <person name="Sinclair B."/>
            <person name="Sperling S."/>
            <person name="Stupka E."/>
            <person name="Sugiura K."/>
            <person name="Sultana R."/>
            <person name="Takenaka Y."/>
            <person name="Taki K."/>
            <person name="Tammoja K."/>
            <person name="Tan S.L."/>
            <person name="Tang S."/>
            <person name="Taylor M.S."/>
            <person name="Tegner J."/>
            <person name="Teichmann S.A."/>
            <person name="Ueda H.R."/>
            <person name="van Nimwegen E."/>
            <person name="Verardo R."/>
            <person name="Wei C.L."/>
            <person name="Yagi K."/>
            <person name="Yamanishi H."/>
            <person name="Zabarovsky E."/>
            <person name="Zhu S."/>
            <person name="Zimmer A."/>
            <person name="Hide W."/>
            <person name="Bult C."/>
            <person name="Grimmond S.M."/>
            <person name="Teasdale R.D."/>
            <person name="Liu E.T."/>
            <person name="Brusic V."/>
            <person name="Quackenbush J."/>
            <person name="Wahlestedt C."/>
            <person name="Mattick J.S."/>
            <person name="Hume D.A."/>
            <person name="Kai C."/>
            <person name="Sasaki D."/>
            <person name="Tomaru Y."/>
            <person name="Fukuda S."/>
            <person name="Kanamori-Katayama M."/>
            <person name="Suzuki M."/>
            <person name="Aoki J."/>
            <person name="Arakawa T."/>
            <person name="Iida J."/>
            <person name="Imamura K."/>
            <person name="Itoh M."/>
            <person name="Kato T."/>
            <person name="Kawaji H."/>
            <person name="Kawagashira N."/>
            <person name="Kawashima T."/>
            <person name="Kojima M."/>
            <person name="Kondo S."/>
            <person name="Konno H."/>
            <person name="Nakano K."/>
            <person name="Ninomiya N."/>
            <person name="Nishio T."/>
            <person name="Okada M."/>
            <person name="Plessy C."/>
            <person name="Shibata K."/>
            <person name="Shiraki T."/>
            <person name="Suzuki S."/>
            <person name="Tagami M."/>
            <person name="Waki K."/>
            <person name="Watahiki A."/>
            <person name="Okamura-Oho Y."/>
            <person name="Suzuki H."/>
            <person name="Kawai J."/>
            <person name="Hayashizaki Y."/>
        </authorList>
    </citation>
    <scope>NUCLEOTIDE SEQUENCE [LARGE SCALE MRNA] (ISOFORM 1)</scope>
    <source>
        <strain>C57BL/6J</strain>
        <strain>NOD</strain>
        <tissue>Embryo</tissue>
        <tissue>Spleen</tissue>
    </source>
</reference>
<reference key="2">
    <citation type="journal article" date="2009" name="PLoS Biol.">
        <title>Lineage-specific biology revealed by a finished genome assembly of the mouse.</title>
        <authorList>
            <person name="Church D.M."/>
            <person name="Goodstadt L."/>
            <person name="Hillier L.W."/>
            <person name="Zody M.C."/>
            <person name="Goldstein S."/>
            <person name="She X."/>
            <person name="Bult C.J."/>
            <person name="Agarwala R."/>
            <person name="Cherry J.L."/>
            <person name="DiCuccio M."/>
            <person name="Hlavina W."/>
            <person name="Kapustin Y."/>
            <person name="Meric P."/>
            <person name="Maglott D."/>
            <person name="Birtle Z."/>
            <person name="Marques A.C."/>
            <person name="Graves T."/>
            <person name="Zhou S."/>
            <person name="Teague B."/>
            <person name="Potamousis K."/>
            <person name="Churas C."/>
            <person name="Place M."/>
            <person name="Herschleb J."/>
            <person name="Runnheim R."/>
            <person name="Forrest D."/>
            <person name="Amos-Landgraf J."/>
            <person name="Schwartz D.C."/>
            <person name="Cheng Z."/>
            <person name="Lindblad-Toh K."/>
            <person name="Eichler E.E."/>
            <person name="Ponting C.P."/>
        </authorList>
    </citation>
    <scope>NUCLEOTIDE SEQUENCE [LARGE SCALE GENOMIC DNA]</scope>
    <source>
        <strain>C57BL/6J</strain>
    </source>
</reference>
<reference key="3">
    <citation type="journal article" date="2004" name="Genome Res.">
        <title>The status, quality, and expansion of the NIH full-length cDNA project: the Mammalian Gene Collection (MGC).</title>
        <authorList>
            <consortium name="The MGC Project Team"/>
        </authorList>
    </citation>
    <scope>NUCLEOTIDE SEQUENCE [LARGE SCALE MRNA] (ISOFORM 2)</scope>
    <source>
        <strain>FVB/N</strain>
        <tissue>Mammary gland</tissue>
    </source>
</reference>
<reference key="4">
    <citation type="journal article" date="2004" name="Genes Dev.">
        <title>Palmitoylation is required for the production of a soluble multimeric Hedgehog protein complex and long-range signaling in vertebrates.</title>
        <authorList>
            <person name="Chen M.-H."/>
            <person name="Li Y.-J."/>
            <person name="Kawakami T."/>
            <person name="Xu S.-M."/>
            <person name="Chuang P.-T."/>
        </authorList>
    </citation>
    <scope>FUNCTION</scope>
    <scope>DEVELOPMENTAL STAGE</scope>
    <scope>SUBCELLULAR LOCATION</scope>
    <scope>DISRUPTION PHENOTYPE</scope>
    <scope>CATALYTIC ACTIVITY</scope>
</reference>
<reference key="5">
    <citation type="journal article" date="2008" name="FEBS J.">
        <title>Mammalian Gup1, a homolog of Saccharomyces cerevisiae glycerol uptake/transporter 1, acts as a negative regulator for N-terminal palmitoylation of Sonic hedgehog.</title>
        <authorList>
            <person name="Abe Y."/>
            <person name="Kita Y."/>
            <person name="Niikura T."/>
        </authorList>
    </citation>
    <scope>SUBCELLULAR LOCATION</scope>
</reference>
<reference key="6">
    <citation type="journal article" date="2014" name="PLoS Genet.">
        <title>Loss of function mutation in the palmitoyl-transferase HHAT leads to syndromic 46,XY disorder of sex development by impeding Hedgehog protein palmitoylation and signaling.</title>
        <authorList>
            <person name="Callier P."/>
            <person name="Calvel P."/>
            <person name="Matevossian A."/>
            <person name="Makrythanasis P."/>
            <person name="Bernard P."/>
            <person name="Kurosaka H."/>
            <person name="Vannier A."/>
            <person name="Thauvin-Robinet C."/>
            <person name="Borel C."/>
            <person name="Mazaud-Guittot S."/>
            <person name="Rolland A."/>
            <person name="Desdoits-Lethimonier C."/>
            <person name="Guipponi M."/>
            <person name="Zimmermann C."/>
            <person name="Stevant I."/>
            <person name="Kuhne F."/>
            <person name="Conne B."/>
            <person name="Santoni F."/>
            <person name="Lambert S."/>
            <person name="Huet F."/>
            <person name="Mugneret F."/>
            <person name="Jaruzelska J."/>
            <person name="Faivre L."/>
            <person name="Wilhelm D."/>
            <person name="Jegou B."/>
            <person name="Trainor P.A."/>
            <person name="Resh M.D."/>
            <person name="Antonarakis S.E."/>
            <person name="Nef S."/>
        </authorList>
    </citation>
    <scope>FUNCTION</scope>
    <scope>DISRUPTION PHENOTYPE</scope>
</reference>
<gene>
    <name type="primary">Hhat</name>
    <name type="synonym">Skn</name>
</gene>
<proteinExistence type="evidence at protein level"/>
<name>HHAT_MOUSE</name>
<protein>
    <recommendedName>
        <fullName>Protein-cysteine N-palmitoyltransferase HHAT</fullName>
        <ecNumber>2.3.1.-</ecNumber>
    </recommendedName>
    <alternativeName>
        <fullName>Hedgehog acyltransferase</fullName>
    </alternativeName>
    <alternativeName>
        <fullName>Skinny hedgehog protein</fullName>
    </alternativeName>
</protein>
<accession>Q8BMT9</accession>
<accession>B1ANS0</accession>
<accession>Q3TA33</accession>
<accession>Q922G3</accession>
<sequence length="499" mass="57864">MLPGWELTLCLLVSLGFHFRSFYEVYKVSREHEEELDQEFELEMDTLFGGLKKDPTDFEWNFWMEWGKRRLVWLFIGHMAVSQLATLLTKKHRPWIVMVYGMWACWCVLGAPGVVMVLLHSTIAFCVAQFRSVLLSWLCSLLLLSTLRLQSVEEVKRRWYKTENEYYLLQFTLTVRCLYYTSFSLELCRQPPSAQPTPSAQGASHSYPWLLTYVFYYPVFHNGPILNFPEFFRQMQQPELNSLQHSLCIVAKGLGRLLCWWWLAELMVHLMYMHALYSSAPLLESVSCWTLGGLALAQVLFFYVKYLVLFGVPALLMRLDGLTPPPLPRCVSTMFSFTGMWRYFDVGLHNFLIRYVYIPLGGSQHGLLGTLLSTATTFAFVSYWHGSYEDLWCWAALNWLGVTVESGVRRLLETPCVRETLARHLSPQAHHRLHALLAACSTSMLILFNLVFLGGIQVGKTYWNRIFLQGWPWVTLSVLGFLYCYSHVDIAWAQTYTVL</sequence>
<keyword id="KW-0012">Acyltransferase</keyword>
<keyword id="KW-0025">Alternative splicing</keyword>
<keyword id="KW-0217">Developmental protein</keyword>
<keyword id="KW-0256">Endoplasmic reticulum</keyword>
<keyword id="KW-0333">Golgi apparatus</keyword>
<keyword id="KW-0342">GTP-binding</keyword>
<keyword id="KW-0449">Lipoprotein</keyword>
<keyword id="KW-0472">Membrane</keyword>
<keyword id="KW-0547">Nucleotide-binding</keyword>
<keyword id="KW-0564">Palmitate</keyword>
<keyword id="KW-1185">Reference proteome</keyword>
<keyword id="KW-0808">Transferase</keyword>
<keyword id="KW-0812">Transmembrane</keyword>
<keyword id="KW-1133">Transmembrane helix</keyword>